<accession>Q03GC2</accession>
<name>FPG_PEDPA</name>
<gene>
    <name evidence="2" type="primary">mutM</name>
    <name evidence="2" type="synonym">fpg</name>
    <name type="ordered locus">PEPE_0689</name>
</gene>
<evidence type="ECO:0000250" key="1"/>
<evidence type="ECO:0000255" key="2">
    <source>
        <dbReference type="HAMAP-Rule" id="MF_00103"/>
    </source>
</evidence>
<proteinExistence type="inferred from homology"/>
<keyword id="KW-0227">DNA damage</keyword>
<keyword id="KW-0234">DNA repair</keyword>
<keyword id="KW-0238">DNA-binding</keyword>
<keyword id="KW-0326">Glycosidase</keyword>
<keyword id="KW-0378">Hydrolase</keyword>
<keyword id="KW-0456">Lyase</keyword>
<keyword id="KW-0479">Metal-binding</keyword>
<keyword id="KW-0511">Multifunctional enzyme</keyword>
<keyword id="KW-0862">Zinc</keyword>
<keyword id="KW-0863">Zinc-finger</keyword>
<feature type="initiator methionine" description="Removed" evidence="1">
    <location>
        <position position="1"/>
    </location>
</feature>
<feature type="chain" id="PRO_1000008731" description="Formamidopyrimidine-DNA glycosylase">
    <location>
        <begin position="2"/>
        <end position="275"/>
    </location>
</feature>
<feature type="zinc finger region" description="FPG-type" evidence="2">
    <location>
        <begin position="239"/>
        <end position="273"/>
    </location>
</feature>
<feature type="active site" description="Schiff-base intermediate with DNA" evidence="2">
    <location>
        <position position="2"/>
    </location>
</feature>
<feature type="active site" description="Proton donor" evidence="2">
    <location>
        <position position="3"/>
    </location>
</feature>
<feature type="active site" description="Proton donor; for beta-elimination activity" evidence="2">
    <location>
        <position position="58"/>
    </location>
</feature>
<feature type="active site" description="Proton donor; for delta-elimination activity" evidence="2">
    <location>
        <position position="263"/>
    </location>
</feature>
<feature type="binding site" evidence="2">
    <location>
        <position position="92"/>
    </location>
    <ligand>
        <name>DNA</name>
        <dbReference type="ChEBI" id="CHEBI:16991"/>
    </ligand>
</feature>
<feature type="binding site" evidence="2">
    <location>
        <position position="111"/>
    </location>
    <ligand>
        <name>DNA</name>
        <dbReference type="ChEBI" id="CHEBI:16991"/>
    </ligand>
</feature>
<feature type="binding site" evidence="2">
    <location>
        <position position="154"/>
    </location>
    <ligand>
        <name>DNA</name>
        <dbReference type="ChEBI" id="CHEBI:16991"/>
    </ligand>
</feature>
<sequence>MPELPEVETVRRGLAALVEGKIVTNVVVRYSKMVSPKAEIFAEELEGKKILNVRRRGKYLLIDFSGDYTMVSHLRMEGKYSVVDRREEYGKHDHVIFELDDGKDLRYNDTRKFGRMNLVPTGEELQVGGLKTIGPEPTPETLTLEYLTHQLRNRKRGMKSFLLDQSMIAGLGNIYADEVLWLSKIHPQQISNTLTDEEIAILRESIFEELQLAIEAKGTTVFSYLNADGHAGSFQNQLHVYHRQGLPCQRCGTPIERIKVAQRGTHFCPHCQVLR</sequence>
<organism>
    <name type="scientific">Pediococcus pentosaceus (strain ATCC 25745 / CCUG 21536 / LMG 10740 / 183-1w)</name>
    <dbReference type="NCBI Taxonomy" id="278197"/>
    <lineage>
        <taxon>Bacteria</taxon>
        <taxon>Bacillati</taxon>
        <taxon>Bacillota</taxon>
        <taxon>Bacilli</taxon>
        <taxon>Lactobacillales</taxon>
        <taxon>Lactobacillaceae</taxon>
        <taxon>Pediococcus</taxon>
    </lineage>
</organism>
<dbReference type="EC" id="3.2.2.23" evidence="2"/>
<dbReference type="EC" id="4.2.99.18" evidence="2"/>
<dbReference type="EMBL" id="CP000422">
    <property type="protein sequence ID" value="ABJ67750.1"/>
    <property type="molecule type" value="Genomic_DNA"/>
</dbReference>
<dbReference type="RefSeq" id="WP_002833789.1">
    <property type="nucleotide sequence ID" value="NC_008525.1"/>
</dbReference>
<dbReference type="SMR" id="Q03GC2"/>
<dbReference type="STRING" id="278197.PEPE_0689"/>
<dbReference type="GeneID" id="33061774"/>
<dbReference type="KEGG" id="ppe:PEPE_0689"/>
<dbReference type="eggNOG" id="COG0266">
    <property type="taxonomic scope" value="Bacteria"/>
</dbReference>
<dbReference type="HOGENOM" id="CLU_038423_1_2_9"/>
<dbReference type="OrthoDB" id="9800855at2"/>
<dbReference type="Proteomes" id="UP000000773">
    <property type="component" value="Chromosome"/>
</dbReference>
<dbReference type="GO" id="GO:0034039">
    <property type="term" value="F:8-oxo-7,8-dihydroguanine DNA N-glycosylase activity"/>
    <property type="evidence" value="ECO:0007669"/>
    <property type="project" value="TreeGrafter"/>
</dbReference>
<dbReference type="GO" id="GO:0140078">
    <property type="term" value="F:class I DNA-(apurinic or apyrimidinic site) endonuclease activity"/>
    <property type="evidence" value="ECO:0007669"/>
    <property type="project" value="UniProtKB-EC"/>
</dbReference>
<dbReference type="GO" id="GO:0003684">
    <property type="term" value="F:damaged DNA binding"/>
    <property type="evidence" value="ECO:0007669"/>
    <property type="project" value="InterPro"/>
</dbReference>
<dbReference type="GO" id="GO:0008270">
    <property type="term" value="F:zinc ion binding"/>
    <property type="evidence" value="ECO:0007669"/>
    <property type="project" value="UniProtKB-UniRule"/>
</dbReference>
<dbReference type="GO" id="GO:0006284">
    <property type="term" value="P:base-excision repair"/>
    <property type="evidence" value="ECO:0007669"/>
    <property type="project" value="InterPro"/>
</dbReference>
<dbReference type="CDD" id="cd08966">
    <property type="entry name" value="EcFpg-like_N"/>
    <property type="match status" value="1"/>
</dbReference>
<dbReference type="FunFam" id="1.10.8.50:FF:000003">
    <property type="entry name" value="Formamidopyrimidine-DNA glycosylase"/>
    <property type="match status" value="1"/>
</dbReference>
<dbReference type="FunFam" id="3.20.190.10:FF:000001">
    <property type="entry name" value="Formamidopyrimidine-DNA glycosylase"/>
    <property type="match status" value="1"/>
</dbReference>
<dbReference type="Gene3D" id="1.10.8.50">
    <property type="match status" value="1"/>
</dbReference>
<dbReference type="Gene3D" id="3.20.190.10">
    <property type="entry name" value="MutM-like, N-terminal"/>
    <property type="match status" value="1"/>
</dbReference>
<dbReference type="HAMAP" id="MF_00103">
    <property type="entry name" value="Fapy_DNA_glycosyl"/>
    <property type="match status" value="1"/>
</dbReference>
<dbReference type="InterPro" id="IPR015886">
    <property type="entry name" value="DNA_glyclase/AP_lyase_DNA-bd"/>
</dbReference>
<dbReference type="InterPro" id="IPR015887">
    <property type="entry name" value="DNA_glyclase_Znf_dom_DNA_BS"/>
</dbReference>
<dbReference type="InterPro" id="IPR020629">
    <property type="entry name" value="Formamido-pyr_DNA_Glyclase"/>
</dbReference>
<dbReference type="InterPro" id="IPR012319">
    <property type="entry name" value="FPG_cat"/>
</dbReference>
<dbReference type="InterPro" id="IPR035937">
    <property type="entry name" value="MutM-like_N-ter"/>
</dbReference>
<dbReference type="InterPro" id="IPR010979">
    <property type="entry name" value="Ribosomal_uS13-like_H2TH"/>
</dbReference>
<dbReference type="InterPro" id="IPR000214">
    <property type="entry name" value="Znf_DNA_glyclase/AP_lyase"/>
</dbReference>
<dbReference type="InterPro" id="IPR010663">
    <property type="entry name" value="Znf_FPG/IleRS"/>
</dbReference>
<dbReference type="NCBIfam" id="TIGR00577">
    <property type="entry name" value="fpg"/>
    <property type="match status" value="1"/>
</dbReference>
<dbReference type="NCBIfam" id="NF002211">
    <property type="entry name" value="PRK01103.1"/>
    <property type="match status" value="1"/>
</dbReference>
<dbReference type="PANTHER" id="PTHR22993">
    <property type="entry name" value="FORMAMIDOPYRIMIDINE-DNA GLYCOSYLASE"/>
    <property type="match status" value="1"/>
</dbReference>
<dbReference type="PANTHER" id="PTHR22993:SF9">
    <property type="entry name" value="FORMAMIDOPYRIMIDINE-DNA GLYCOSYLASE"/>
    <property type="match status" value="1"/>
</dbReference>
<dbReference type="Pfam" id="PF01149">
    <property type="entry name" value="Fapy_DNA_glyco"/>
    <property type="match status" value="1"/>
</dbReference>
<dbReference type="Pfam" id="PF06831">
    <property type="entry name" value="H2TH"/>
    <property type="match status" value="1"/>
</dbReference>
<dbReference type="Pfam" id="PF06827">
    <property type="entry name" value="zf-FPG_IleRS"/>
    <property type="match status" value="1"/>
</dbReference>
<dbReference type="SMART" id="SM00898">
    <property type="entry name" value="Fapy_DNA_glyco"/>
    <property type="match status" value="1"/>
</dbReference>
<dbReference type="SMART" id="SM01232">
    <property type="entry name" value="H2TH"/>
    <property type="match status" value="1"/>
</dbReference>
<dbReference type="SUPFAM" id="SSF57716">
    <property type="entry name" value="Glucocorticoid receptor-like (DNA-binding domain)"/>
    <property type="match status" value="1"/>
</dbReference>
<dbReference type="SUPFAM" id="SSF81624">
    <property type="entry name" value="N-terminal domain of MutM-like DNA repair proteins"/>
    <property type="match status" value="1"/>
</dbReference>
<dbReference type="SUPFAM" id="SSF46946">
    <property type="entry name" value="S13-like H2TH domain"/>
    <property type="match status" value="1"/>
</dbReference>
<dbReference type="PROSITE" id="PS51068">
    <property type="entry name" value="FPG_CAT"/>
    <property type="match status" value="1"/>
</dbReference>
<dbReference type="PROSITE" id="PS01242">
    <property type="entry name" value="ZF_FPG_1"/>
    <property type="match status" value="1"/>
</dbReference>
<dbReference type="PROSITE" id="PS51066">
    <property type="entry name" value="ZF_FPG_2"/>
    <property type="match status" value="1"/>
</dbReference>
<reference key="1">
    <citation type="journal article" date="2006" name="Proc. Natl. Acad. Sci. U.S.A.">
        <title>Comparative genomics of the lactic acid bacteria.</title>
        <authorList>
            <person name="Makarova K.S."/>
            <person name="Slesarev A."/>
            <person name="Wolf Y.I."/>
            <person name="Sorokin A."/>
            <person name="Mirkin B."/>
            <person name="Koonin E.V."/>
            <person name="Pavlov A."/>
            <person name="Pavlova N."/>
            <person name="Karamychev V."/>
            <person name="Polouchine N."/>
            <person name="Shakhova V."/>
            <person name="Grigoriev I."/>
            <person name="Lou Y."/>
            <person name="Rohksar D."/>
            <person name="Lucas S."/>
            <person name="Huang K."/>
            <person name="Goodstein D.M."/>
            <person name="Hawkins T."/>
            <person name="Plengvidhya V."/>
            <person name="Welker D."/>
            <person name="Hughes J."/>
            <person name="Goh Y."/>
            <person name="Benson A."/>
            <person name="Baldwin K."/>
            <person name="Lee J.-H."/>
            <person name="Diaz-Muniz I."/>
            <person name="Dosti B."/>
            <person name="Smeianov V."/>
            <person name="Wechter W."/>
            <person name="Barabote R."/>
            <person name="Lorca G."/>
            <person name="Altermann E."/>
            <person name="Barrangou R."/>
            <person name="Ganesan B."/>
            <person name="Xie Y."/>
            <person name="Rawsthorne H."/>
            <person name="Tamir D."/>
            <person name="Parker C."/>
            <person name="Breidt F."/>
            <person name="Broadbent J.R."/>
            <person name="Hutkins R."/>
            <person name="O'Sullivan D."/>
            <person name="Steele J."/>
            <person name="Unlu G."/>
            <person name="Saier M.H. Jr."/>
            <person name="Klaenhammer T."/>
            <person name="Richardson P."/>
            <person name="Kozyavkin S."/>
            <person name="Weimer B.C."/>
            <person name="Mills D.A."/>
        </authorList>
    </citation>
    <scope>NUCLEOTIDE SEQUENCE [LARGE SCALE GENOMIC DNA]</scope>
    <source>
        <strain>ATCC 25745 / CCUG 21536 / LMG 10740 / 183-1w</strain>
    </source>
</reference>
<comment type="function">
    <text evidence="2">Involved in base excision repair of DNA damaged by oxidation or by mutagenic agents. Acts as a DNA glycosylase that recognizes and removes damaged bases. Has a preference for oxidized purines, such as 7,8-dihydro-8-oxoguanine (8-oxoG). Has AP (apurinic/apyrimidinic) lyase activity and introduces nicks in the DNA strand. Cleaves the DNA backbone by beta-delta elimination to generate a single-strand break at the site of the removed base with both 3'- and 5'-phosphates.</text>
</comment>
<comment type="catalytic activity">
    <reaction evidence="2">
        <text>Hydrolysis of DNA containing ring-opened 7-methylguanine residues, releasing 2,6-diamino-4-hydroxy-5-(N-methyl)formamidopyrimidine.</text>
        <dbReference type="EC" id="3.2.2.23"/>
    </reaction>
</comment>
<comment type="catalytic activity">
    <reaction evidence="2">
        <text>2'-deoxyribonucleotide-(2'-deoxyribose 5'-phosphate)-2'-deoxyribonucleotide-DNA = a 3'-end 2'-deoxyribonucleotide-(2,3-dehydro-2,3-deoxyribose 5'-phosphate)-DNA + a 5'-end 5'-phospho-2'-deoxyribonucleoside-DNA + H(+)</text>
        <dbReference type="Rhea" id="RHEA:66592"/>
        <dbReference type="Rhea" id="RHEA-COMP:13180"/>
        <dbReference type="Rhea" id="RHEA-COMP:16897"/>
        <dbReference type="Rhea" id="RHEA-COMP:17067"/>
        <dbReference type="ChEBI" id="CHEBI:15378"/>
        <dbReference type="ChEBI" id="CHEBI:136412"/>
        <dbReference type="ChEBI" id="CHEBI:157695"/>
        <dbReference type="ChEBI" id="CHEBI:167181"/>
        <dbReference type="EC" id="4.2.99.18"/>
    </reaction>
</comment>
<comment type="cofactor">
    <cofactor evidence="2">
        <name>Zn(2+)</name>
        <dbReference type="ChEBI" id="CHEBI:29105"/>
    </cofactor>
    <text evidence="2">Binds 1 zinc ion per subunit.</text>
</comment>
<comment type="subunit">
    <text evidence="2">Monomer.</text>
</comment>
<comment type="similarity">
    <text evidence="2">Belongs to the FPG family.</text>
</comment>
<protein>
    <recommendedName>
        <fullName evidence="2">Formamidopyrimidine-DNA glycosylase</fullName>
        <shortName evidence="2">Fapy-DNA glycosylase</shortName>
        <ecNumber evidence="2">3.2.2.23</ecNumber>
    </recommendedName>
    <alternativeName>
        <fullName evidence="2">DNA-(apurinic or apyrimidinic site) lyase MutM</fullName>
        <shortName evidence="2">AP lyase MutM</shortName>
        <ecNumber evidence="2">4.2.99.18</ecNumber>
    </alternativeName>
</protein>